<accession>Q31UZ1</accession>
<protein>
    <recommendedName>
        <fullName evidence="2">Formamidopyrimidine-DNA glycosylase</fullName>
        <shortName evidence="2">Fapy-DNA glycosylase</shortName>
        <ecNumber evidence="2">3.2.2.23</ecNumber>
    </recommendedName>
    <alternativeName>
        <fullName evidence="2">DNA-(apurinic or apyrimidinic site) lyase MutM</fullName>
        <shortName evidence="2">AP lyase MutM</shortName>
        <ecNumber evidence="2">4.2.99.18</ecNumber>
    </alternativeName>
</protein>
<organism>
    <name type="scientific">Shigella boydii serotype 4 (strain Sb227)</name>
    <dbReference type="NCBI Taxonomy" id="300268"/>
    <lineage>
        <taxon>Bacteria</taxon>
        <taxon>Pseudomonadati</taxon>
        <taxon>Pseudomonadota</taxon>
        <taxon>Gammaproteobacteria</taxon>
        <taxon>Enterobacterales</taxon>
        <taxon>Enterobacteriaceae</taxon>
        <taxon>Shigella</taxon>
    </lineage>
</organism>
<comment type="function">
    <text evidence="2">Involved in base excision repair of DNA damaged by oxidation or by mutagenic agents. Acts as a DNA glycosylase that recognizes and removes damaged bases. Has a preference for oxidized purines, such as 7,8-dihydro-8-oxoguanine (8-oxoG). Has AP (apurinic/apyrimidinic) lyase activity and introduces nicks in the DNA strand. Cleaves the DNA backbone by beta-delta elimination to generate a single-strand break at the site of the removed base with both 3'- and 5'-phosphates.</text>
</comment>
<comment type="catalytic activity">
    <reaction evidence="2">
        <text>Hydrolysis of DNA containing ring-opened 7-methylguanine residues, releasing 2,6-diamino-4-hydroxy-5-(N-methyl)formamidopyrimidine.</text>
        <dbReference type="EC" id="3.2.2.23"/>
    </reaction>
</comment>
<comment type="catalytic activity">
    <reaction evidence="2">
        <text>2'-deoxyribonucleotide-(2'-deoxyribose 5'-phosphate)-2'-deoxyribonucleotide-DNA = a 3'-end 2'-deoxyribonucleotide-(2,3-dehydro-2,3-deoxyribose 5'-phosphate)-DNA + a 5'-end 5'-phospho-2'-deoxyribonucleoside-DNA + H(+)</text>
        <dbReference type="Rhea" id="RHEA:66592"/>
        <dbReference type="Rhea" id="RHEA-COMP:13180"/>
        <dbReference type="Rhea" id="RHEA-COMP:16897"/>
        <dbReference type="Rhea" id="RHEA-COMP:17067"/>
        <dbReference type="ChEBI" id="CHEBI:15378"/>
        <dbReference type="ChEBI" id="CHEBI:136412"/>
        <dbReference type="ChEBI" id="CHEBI:157695"/>
        <dbReference type="ChEBI" id="CHEBI:167181"/>
        <dbReference type="EC" id="4.2.99.18"/>
    </reaction>
</comment>
<comment type="cofactor">
    <cofactor evidence="2">
        <name>Zn(2+)</name>
        <dbReference type="ChEBI" id="CHEBI:29105"/>
    </cofactor>
    <text evidence="2">Binds 1 zinc ion per subunit.</text>
</comment>
<comment type="subunit">
    <text evidence="2">Monomer.</text>
</comment>
<comment type="similarity">
    <text evidence="2">Belongs to the FPG family.</text>
</comment>
<sequence>MPELPEVETSRRGIEPHLVGATILHAVVRNGRLRWPVSEEIYRLSDQPVLSVQRRAKYLLLELPEGWIIIHLGMSGSLRILPEELPPEKHDHVDLVMSNGKVLRYTDPRRFGAWLWTKELEGHNVLAHLGPEPLSDDFNGEYLHQKCAKKKTAIKPWLMDNKLVVGVGNIYASESLFAAGIHPDRLASSLSLAECELLARVIKAVLLRSIEQGGTTLKDFLQSDGKPGYFAQELQVYGRKGEPCRVCGTPIVATKHAQRATFYCRQCQK</sequence>
<dbReference type="EC" id="3.2.2.23" evidence="2"/>
<dbReference type="EC" id="4.2.99.18" evidence="2"/>
<dbReference type="EMBL" id="CP000036">
    <property type="protein sequence ID" value="ABB68117.1"/>
    <property type="molecule type" value="Genomic_DNA"/>
</dbReference>
<dbReference type="RefSeq" id="WP_001114533.1">
    <property type="nucleotide sequence ID" value="NC_007613.1"/>
</dbReference>
<dbReference type="SMR" id="Q31UZ1"/>
<dbReference type="GeneID" id="93778348"/>
<dbReference type="KEGG" id="sbo:SBO_3637"/>
<dbReference type="HOGENOM" id="CLU_038423_1_1_6"/>
<dbReference type="Proteomes" id="UP000007067">
    <property type="component" value="Chromosome"/>
</dbReference>
<dbReference type="GO" id="GO:0034039">
    <property type="term" value="F:8-oxo-7,8-dihydroguanine DNA N-glycosylase activity"/>
    <property type="evidence" value="ECO:0007669"/>
    <property type="project" value="TreeGrafter"/>
</dbReference>
<dbReference type="GO" id="GO:0140078">
    <property type="term" value="F:class I DNA-(apurinic or apyrimidinic site) endonuclease activity"/>
    <property type="evidence" value="ECO:0007669"/>
    <property type="project" value="UniProtKB-EC"/>
</dbReference>
<dbReference type="GO" id="GO:0003684">
    <property type="term" value="F:damaged DNA binding"/>
    <property type="evidence" value="ECO:0007669"/>
    <property type="project" value="InterPro"/>
</dbReference>
<dbReference type="GO" id="GO:0008270">
    <property type="term" value="F:zinc ion binding"/>
    <property type="evidence" value="ECO:0007669"/>
    <property type="project" value="UniProtKB-UniRule"/>
</dbReference>
<dbReference type="GO" id="GO:0006284">
    <property type="term" value="P:base-excision repair"/>
    <property type="evidence" value="ECO:0007669"/>
    <property type="project" value="InterPro"/>
</dbReference>
<dbReference type="CDD" id="cd08966">
    <property type="entry name" value="EcFpg-like_N"/>
    <property type="match status" value="1"/>
</dbReference>
<dbReference type="FunFam" id="1.10.8.50:FF:000003">
    <property type="entry name" value="Formamidopyrimidine-DNA glycosylase"/>
    <property type="match status" value="1"/>
</dbReference>
<dbReference type="FunFam" id="3.20.190.10:FF:000001">
    <property type="entry name" value="Formamidopyrimidine-DNA glycosylase"/>
    <property type="match status" value="1"/>
</dbReference>
<dbReference type="Gene3D" id="1.10.8.50">
    <property type="match status" value="1"/>
</dbReference>
<dbReference type="Gene3D" id="3.20.190.10">
    <property type="entry name" value="MutM-like, N-terminal"/>
    <property type="match status" value="1"/>
</dbReference>
<dbReference type="HAMAP" id="MF_00103">
    <property type="entry name" value="Fapy_DNA_glycosyl"/>
    <property type="match status" value="1"/>
</dbReference>
<dbReference type="InterPro" id="IPR015886">
    <property type="entry name" value="DNA_glyclase/AP_lyase_DNA-bd"/>
</dbReference>
<dbReference type="InterPro" id="IPR015887">
    <property type="entry name" value="DNA_glyclase_Znf_dom_DNA_BS"/>
</dbReference>
<dbReference type="InterPro" id="IPR020629">
    <property type="entry name" value="Formamido-pyr_DNA_Glyclase"/>
</dbReference>
<dbReference type="InterPro" id="IPR012319">
    <property type="entry name" value="FPG_cat"/>
</dbReference>
<dbReference type="InterPro" id="IPR035937">
    <property type="entry name" value="MutM-like_N-ter"/>
</dbReference>
<dbReference type="InterPro" id="IPR010979">
    <property type="entry name" value="Ribosomal_uS13-like_H2TH"/>
</dbReference>
<dbReference type="InterPro" id="IPR000214">
    <property type="entry name" value="Znf_DNA_glyclase/AP_lyase"/>
</dbReference>
<dbReference type="InterPro" id="IPR010663">
    <property type="entry name" value="Znf_FPG/IleRS"/>
</dbReference>
<dbReference type="NCBIfam" id="TIGR00577">
    <property type="entry name" value="fpg"/>
    <property type="match status" value="1"/>
</dbReference>
<dbReference type="NCBIfam" id="NF002211">
    <property type="entry name" value="PRK01103.1"/>
    <property type="match status" value="1"/>
</dbReference>
<dbReference type="PANTHER" id="PTHR22993">
    <property type="entry name" value="FORMAMIDOPYRIMIDINE-DNA GLYCOSYLASE"/>
    <property type="match status" value="1"/>
</dbReference>
<dbReference type="PANTHER" id="PTHR22993:SF9">
    <property type="entry name" value="FORMAMIDOPYRIMIDINE-DNA GLYCOSYLASE"/>
    <property type="match status" value="1"/>
</dbReference>
<dbReference type="Pfam" id="PF01149">
    <property type="entry name" value="Fapy_DNA_glyco"/>
    <property type="match status" value="1"/>
</dbReference>
<dbReference type="Pfam" id="PF06831">
    <property type="entry name" value="H2TH"/>
    <property type="match status" value="1"/>
</dbReference>
<dbReference type="Pfam" id="PF06827">
    <property type="entry name" value="zf-FPG_IleRS"/>
    <property type="match status" value="1"/>
</dbReference>
<dbReference type="SMART" id="SM00898">
    <property type="entry name" value="Fapy_DNA_glyco"/>
    <property type="match status" value="1"/>
</dbReference>
<dbReference type="SMART" id="SM01232">
    <property type="entry name" value="H2TH"/>
    <property type="match status" value="1"/>
</dbReference>
<dbReference type="SUPFAM" id="SSF57716">
    <property type="entry name" value="Glucocorticoid receptor-like (DNA-binding domain)"/>
    <property type="match status" value="1"/>
</dbReference>
<dbReference type="SUPFAM" id="SSF81624">
    <property type="entry name" value="N-terminal domain of MutM-like DNA repair proteins"/>
    <property type="match status" value="1"/>
</dbReference>
<dbReference type="SUPFAM" id="SSF46946">
    <property type="entry name" value="S13-like H2TH domain"/>
    <property type="match status" value="1"/>
</dbReference>
<dbReference type="PROSITE" id="PS51068">
    <property type="entry name" value="FPG_CAT"/>
    <property type="match status" value="1"/>
</dbReference>
<dbReference type="PROSITE" id="PS01242">
    <property type="entry name" value="ZF_FPG_1"/>
    <property type="match status" value="1"/>
</dbReference>
<dbReference type="PROSITE" id="PS51066">
    <property type="entry name" value="ZF_FPG_2"/>
    <property type="match status" value="1"/>
</dbReference>
<feature type="initiator methionine" description="Removed" evidence="1">
    <location>
        <position position="1"/>
    </location>
</feature>
<feature type="chain" id="PRO_0000228469" description="Formamidopyrimidine-DNA glycosylase">
    <location>
        <begin position="2"/>
        <end position="269"/>
    </location>
</feature>
<feature type="zinc finger region" description="FPG-type" evidence="2">
    <location>
        <begin position="235"/>
        <end position="269"/>
    </location>
</feature>
<feature type="active site" description="Schiff-base intermediate with DNA" evidence="2">
    <location>
        <position position="2"/>
    </location>
</feature>
<feature type="active site" description="Proton donor" evidence="2">
    <location>
        <position position="3"/>
    </location>
</feature>
<feature type="active site" description="Proton donor; for beta-elimination activity" evidence="2">
    <location>
        <position position="57"/>
    </location>
</feature>
<feature type="active site" description="Proton donor; for delta-elimination activity" evidence="2">
    <location>
        <position position="259"/>
    </location>
</feature>
<feature type="binding site" evidence="2">
    <location>
        <position position="90"/>
    </location>
    <ligand>
        <name>DNA</name>
        <dbReference type="ChEBI" id="CHEBI:16991"/>
    </ligand>
</feature>
<feature type="binding site" evidence="2">
    <location>
        <position position="109"/>
    </location>
    <ligand>
        <name>DNA</name>
        <dbReference type="ChEBI" id="CHEBI:16991"/>
    </ligand>
</feature>
<feature type="binding site" evidence="2">
    <location>
        <position position="150"/>
    </location>
    <ligand>
        <name>DNA</name>
        <dbReference type="ChEBI" id="CHEBI:16991"/>
    </ligand>
</feature>
<proteinExistence type="inferred from homology"/>
<reference key="1">
    <citation type="journal article" date="2005" name="Nucleic Acids Res.">
        <title>Genome dynamics and diversity of Shigella species, the etiologic agents of bacillary dysentery.</title>
        <authorList>
            <person name="Yang F."/>
            <person name="Yang J."/>
            <person name="Zhang X."/>
            <person name="Chen L."/>
            <person name="Jiang Y."/>
            <person name="Yan Y."/>
            <person name="Tang X."/>
            <person name="Wang J."/>
            <person name="Xiong Z."/>
            <person name="Dong J."/>
            <person name="Xue Y."/>
            <person name="Zhu Y."/>
            <person name="Xu X."/>
            <person name="Sun L."/>
            <person name="Chen S."/>
            <person name="Nie H."/>
            <person name="Peng J."/>
            <person name="Xu J."/>
            <person name="Wang Y."/>
            <person name="Yuan Z."/>
            <person name="Wen Y."/>
            <person name="Yao Z."/>
            <person name="Shen Y."/>
            <person name="Qiang B."/>
            <person name="Hou Y."/>
            <person name="Yu J."/>
            <person name="Jin Q."/>
        </authorList>
    </citation>
    <scope>NUCLEOTIDE SEQUENCE [LARGE SCALE GENOMIC DNA]</scope>
    <source>
        <strain>Sb227</strain>
    </source>
</reference>
<gene>
    <name evidence="2" type="primary">mutM</name>
    <name evidence="2" type="synonym">fpg</name>
    <name type="ordered locus">SBO_3637</name>
</gene>
<evidence type="ECO:0000250" key="1"/>
<evidence type="ECO:0000255" key="2">
    <source>
        <dbReference type="HAMAP-Rule" id="MF_00103"/>
    </source>
</evidence>
<keyword id="KW-0227">DNA damage</keyword>
<keyword id="KW-0234">DNA repair</keyword>
<keyword id="KW-0238">DNA-binding</keyword>
<keyword id="KW-0326">Glycosidase</keyword>
<keyword id="KW-0378">Hydrolase</keyword>
<keyword id="KW-0456">Lyase</keyword>
<keyword id="KW-0479">Metal-binding</keyword>
<keyword id="KW-0511">Multifunctional enzyme</keyword>
<keyword id="KW-0862">Zinc</keyword>
<keyword id="KW-0863">Zinc-finger</keyword>
<name>FPG_SHIBS</name>